<comment type="function">
    <text evidence="1">Peptide chain release factor 1 directs the termination of translation in response to the peptide chain termination codons UAG and UAA.</text>
</comment>
<comment type="subcellular location">
    <subcellularLocation>
        <location evidence="1">Cytoplasm</location>
    </subcellularLocation>
</comment>
<comment type="PTM">
    <text evidence="1">Methylated by PrmC. Methylation increases the termination efficiency of RF1.</text>
</comment>
<comment type="similarity">
    <text evidence="1">Belongs to the prokaryotic/mitochondrial release factor family.</text>
</comment>
<proteinExistence type="inferred from homology"/>
<organism>
    <name type="scientific">Azoarcus sp. (strain BH72)</name>
    <dbReference type="NCBI Taxonomy" id="418699"/>
    <lineage>
        <taxon>Bacteria</taxon>
        <taxon>Pseudomonadati</taxon>
        <taxon>Pseudomonadota</taxon>
        <taxon>Betaproteobacteria</taxon>
        <taxon>Rhodocyclales</taxon>
        <taxon>Zoogloeaceae</taxon>
        <taxon>Azoarcus</taxon>
    </lineage>
</organism>
<protein>
    <recommendedName>
        <fullName evidence="1">Peptide chain release factor 1</fullName>
        <shortName evidence="1">RF-1</shortName>
    </recommendedName>
</protein>
<name>RF1_AZOSB</name>
<feature type="chain" id="PRO_1000004859" description="Peptide chain release factor 1">
    <location>
        <begin position="1"/>
        <end position="361"/>
    </location>
</feature>
<feature type="modified residue" description="N5-methylglutamine" evidence="1">
    <location>
        <position position="235"/>
    </location>
</feature>
<gene>
    <name evidence="1" type="primary">prfA</name>
    <name type="ordered locus">azo0981</name>
</gene>
<accession>A1K443</accession>
<reference key="1">
    <citation type="journal article" date="2006" name="Nat. Biotechnol.">
        <title>Complete genome of the mutualistic, N2-fixing grass endophyte Azoarcus sp. strain BH72.</title>
        <authorList>
            <person name="Krause A."/>
            <person name="Ramakumar A."/>
            <person name="Bartels D."/>
            <person name="Battistoni F."/>
            <person name="Bekel T."/>
            <person name="Boch J."/>
            <person name="Boehm M."/>
            <person name="Friedrich F."/>
            <person name="Hurek T."/>
            <person name="Krause L."/>
            <person name="Linke B."/>
            <person name="McHardy A.C."/>
            <person name="Sarkar A."/>
            <person name="Schneiker S."/>
            <person name="Syed A.A."/>
            <person name="Thauer R."/>
            <person name="Vorhoelter F.-J."/>
            <person name="Weidner S."/>
            <person name="Puehler A."/>
            <person name="Reinhold-Hurek B."/>
            <person name="Kaiser O."/>
            <person name="Goesmann A."/>
        </authorList>
    </citation>
    <scope>NUCLEOTIDE SEQUENCE [LARGE SCALE GENOMIC DNA]</scope>
    <source>
        <strain>BH72</strain>
    </source>
</reference>
<evidence type="ECO:0000255" key="1">
    <source>
        <dbReference type="HAMAP-Rule" id="MF_00093"/>
    </source>
</evidence>
<keyword id="KW-0963">Cytoplasm</keyword>
<keyword id="KW-0488">Methylation</keyword>
<keyword id="KW-0648">Protein biosynthesis</keyword>
<keyword id="KW-1185">Reference proteome</keyword>
<dbReference type="EMBL" id="AM406670">
    <property type="protein sequence ID" value="CAL93598.1"/>
    <property type="molecule type" value="Genomic_DNA"/>
</dbReference>
<dbReference type="RefSeq" id="WP_011764715.1">
    <property type="nucleotide sequence ID" value="NC_008702.1"/>
</dbReference>
<dbReference type="SMR" id="A1K443"/>
<dbReference type="STRING" id="62928.azo0981"/>
<dbReference type="KEGG" id="aoa:dqs_1082"/>
<dbReference type="KEGG" id="azo:azo0981"/>
<dbReference type="eggNOG" id="COG0216">
    <property type="taxonomic scope" value="Bacteria"/>
</dbReference>
<dbReference type="HOGENOM" id="CLU_036856_0_1_4"/>
<dbReference type="OrthoDB" id="9806673at2"/>
<dbReference type="Proteomes" id="UP000002588">
    <property type="component" value="Chromosome"/>
</dbReference>
<dbReference type="GO" id="GO:0005737">
    <property type="term" value="C:cytoplasm"/>
    <property type="evidence" value="ECO:0007669"/>
    <property type="project" value="UniProtKB-SubCell"/>
</dbReference>
<dbReference type="GO" id="GO:0016149">
    <property type="term" value="F:translation release factor activity, codon specific"/>
    <property type="evidence" value="ECO:0007669"/>
    <property type="project" value="UniProtKB-UniRule"/>
</dbReference>
<dbReference type="FunFam" id="3.30.160.20:FF:000004">
    <property type="entry name" value="Peptide chain release factor 1"/>
    <property type="match status" value="1"/>
</dbReference>
<dbReference type="FunFam" id="3.30.70.1660:FF:000002">
    <property type="entry name" value="Peptide chain release factor 1"/>
    <property type="match status" value="1"/>
</dbReference>
<dbReference type="FunFam" id="3.30.70.1660:FF:000004">
    <property type="entry name" value="Peptide chain release factor 1"/>
    <property type="match status" value="1"/>
</dbReference>
<dbReference type="Gene3D" id="3.30.160.20">
    <property type="match status" value="1"/>
</dbReference>
<dbReference type="Gene3D" id="3.30.70.1660">
    <property type="match status" value="1"/>
</dbReference>
<dbReference type="Gene3D" id="6.10.140.1950">
    <property type="match status" value="1"/>
</dbReference>
<dbReference type="HAMAP" id="MF_00093">
    <property type="entry name" value="Rel_fac_1"/>
    <property type="match status" value="1"/>
</dbReference>
<dbReference type="InterPro" id="IPR005139">
    <property type="entry name" value="PCRF"/>
</dbReference>
<dbReference type="InterPro" id="IPR000352">
    <property type="entry name" value="Pep_chain_release_fac_I"/>
</dbReference>
<dbReference type="InterPro" id="IPR045853">
    <property type="entry name" value="Pep_chain_release_fac_I_sf"/>
</dbReference>
<dbReference type="InterPro" id="IPR050057">
    <property type="entry name" value="Prokaryotic/Mito_RF"/>
</dbReference>
<dbReference type="InterPro" id="IPR004373">
    <property type="entry name" value="RF-1"/>
</dbReference>
<dbReference type="NCBIfam" id="TIGR00019">
    <property type="entry name" value="prfA"/>
    <property type="match status" value="1"/>
</dbReference>
<dbReference type="NCBIfam" id="NF001859">
    <property type="entry name" value="PRK00591.1"/>
    <property type="match status" value="1"/>
</dbReference>
<dbReference type="PANTHER" id="PTHR43804">
    <property type="entry name" value="LD18447P"/>
    <property type="match status" value="1"/>
</dbReference>
<dbReference type="PANTHER" id="PTHR43804:SF7">
    <property type="entry name" value="LD18447P"/>
    <property type="match status" value="1"/>
</dbReference>
<dbReference type="Pfam" id="PF03462">
    <property type="entry name" value="PCRF"/>
    <property type="match status" value="1"/>
</dbReference>
<dbReference type="Pfam" id="PF00472">
    <property type="entry name" value="RF-1"/>
    <property type="match status" value="1"/>
</dbReference>
<dbReference type="SMART" id="SM00937">
    <property type="entry name" value="PCRF"/>
    <property type="match status" value="1"/>
</dbReference>
<dbReference type="SUPFAM" id="SSF75620">
    <property type="entry name" value="Release factor"/>
    <property type="match status" value="1"/>
</dbReference>
<dbReference type="PROSITE" id="PS00745">
    <property type="entry name" value="RF_PROK_I"/>
    <property type="match status" value="1"/>
</dbReference>
<sequence>MKQSIRDKLEHLAGRLAELDRELSSEDATRDMNAFRDLSRERAELEPVVALYGAYRQAEQDCATARELLDDPEMQELGRSELEAGEARIAALDGDLQRALLPRDPNDERNLFLEIRAGTGGDEAALFAGDLLRMYSRYAERQRWRVEIVSSNPSDLGGYKEVIARIVGAGAYSRLKFESGGHRVQRIPVTETQGRIHTSACTVAVMPEADELAAVEINPADLRIDTFRASGAGGQHINKTDSAVRITHLPTGLVVECQDDRSQHRNKAQAMAVLAARLNDAQLRARQSAEAATRRSLIGSGDRSERIRTYNFPQGRVTDHRINLTLYKLDAVMQGELDELLAALVLEHQAEQLAALAEEGL</sequence>